<reference key="1">
    <citation type="journal article" date="2007" name="Science">
        <title>Legumes symbioses: absence of nod genes in photosynthetic bradyrhizobia.</title>
        <authorList>
            <person name="Giraud E."/>
            <person name="Moulin L."/>
            <person name="Vallenet D."/>
            <person name="Barbe V."/>
            <person name="Cytryn E."/>
            <person name="Avarre J.-C."/>
            <person name="Jaubert M."/>
            <person name="Simon D."/>
            <person name="Cartieaux F."/>
            <person name="Prin Y."/>
            <person name="Bena G."/>
            <person name="Hannibal L."/>
            <person name="Fardoux J."/>
            <person name="Kojadinovic M."/>
            <person name="Vuillet L."/>
            <person name="Lajus A."/>
            <person name="Cruveiller S."/>
            <person name="Rouy Z."/>
            <person name="Mangenot S."/>
            <person name="Segurens B."/>
            <person name="Dossat C."/>
            <person name="Franck W.L."/>
            <person name="Chang W.-S."/>
            <person name="Saunders E."/>
            <person name="Bruce D."/>
            <person name="Richardson P."/>
            <person name="Normand P."/>
            <person name="Dreyfus B."/>
            <person name="Pignol D."/>
            <person name="Stacey G."/>
            <person name="Emerich D."/>
            <person name="Vermeglio A."/>
            <person name="Medigue C."/>
            <person name="Sadowsky M."/>
        </authorList>
    </citation>
    <scope>NUCLEOTIDE SEQUENCE [LARGE SCALE GENOMIC DNA]</scope>
    <source>
        <strain>ORS 278</strain>
    </source>
</reference>
<protein>
    <recommendedName>
        <fullName evidence="2">Small ribosomal subunit protein uS12</fullName>
    </recommendedName>
    <alternativeName>
        <fullName evidence="4">30S ribosomal protein S12</fullName>
    </alternativeName>
</protein>
<dbReference type="EMBL" id="CU234118">
    <property type="protein sequence ID" value="CAL76863.1"/>
    <property type="status" value="ALT_INIT"/>
    <property type="molecule type" value="Genomic_DNA"/>
</dbReference>
<dbReference type="RefSeq" id="WP_006611834.1">
    <property type="nucleotide sequence ID" value="NC_009445.1"/>
</dbReference>
<dbReference type="SMR" id="A4YSI7"/>
<dbReference type="STRING" id="114615.BRADO3061"/>
<dbReference type="GeneID" id="92954038"/>
<dbReference type="KEGG" id="bra:BRADO3061"/>
<dbReference type="eggNOG" id="COG0048">
    <property type="taxonomic scope" value="Bacteria"/>
</dbReference>
<dbReference type="HOGENOM" id="CLU_104295_1_2_5"/>
<dbReference type="OrthoDB" id="9802366at2"/>
<dbReference type="Proteomes" id="UP000001994">
    <property type="component" value="Chromosome"/>
</dbReference>
<dbReference type="GO" id="GO:0015935">
    <property type="term" value="C:small ribosomal subunit"/>
    <property type="evidence" value="ECO:0007669"/>
    <property type="project" value="InterPro"/>
</dbReference>
<dbReference type="GO" id="GO:0019843">
    <property type="term" value="F:rRNA binding"/>
    <property type="evidence" value="ECO:0007669"/>
    <property type="project" value="UniProtKB-UniRule"/>
</dbReference>
<dbReference type="GO" id="GO:0003735">
    <property type="term" value="F:structural constituent of ribosome"/>
    <property type="evidence" value="ECO:0007669"/>
    <property type="project" value="InterPro"/>
</dbReference>
<dbReference type="GO" id="GO:0000049">
    <property type="term" value="F:tRNA binding"/>
    <property type="evidence" value="ECO:0007669"/>
    <property type="project" value="UniProtKB-UniRule"/>
</dbReference>
<dbReference type="GO" id="GO:0006412">
    <property type="term" value="P:translation"/>
    <property type="evidence" value="ECO:0007669"/>
    <property type="project" value="UniProtKB-UniRule"/>
</dbReference>
<dbReference type="CDD" id="cd03368">
    <property type="entry name" value="Ribosomal_S12"/>
    <property type="match status" value="1"/>
</dbReference>
<dbReference type="FunFam" id="2.40.50.140:FF:000001">
    <property type="entry name" value="30S ribosomal protein S12"/>
    <property type="match status" value="1"/>
</dbReference>
<dbReference type="Gene3D" id="2.40.50.140">
    <property type="entry name" value="Nucleic acid-binding proteins"/>
    <property type="match status" value="1"/>
</dbReference>
<dbReference type="HAMAP" id="MF_00403_B">
    <property type="entry name" value="Ribosomal_uS12_B"/>
    <property type="match status" value="1"/>
</dbReference>
<dbReference type="InterPro" id="IPR012340">
    <property type="entry name" value="NA-bd_OB-fold"/>
</dbReference>
<dbReference type="InterPro" id="IPR006032">
    <property type="entry name" value="Ribosomal_uS12"/>
</dbReference>
<dbReference type="InterPro" id="IPR005679">
    <property type="entry name" value="Ribosomal_uS12_bac"/>
</dbReference>
<dbReference type="NCBIfam" id="TIGR00981">
    <property type="entry name" value="rpsL_bact"/>
    <property type="match status" value="1"/>
</dbReference>
<dbReference type="PANTHER" id="PTHR11652">
    <property type="entry name" value="30S RIBOSOMAL PROTEIN S12 FAMILY MEMBER"/>
    <property type="match status" value="1"/>
</dbReference>
<dbReference type="Pfam" id="PF00164">
    <property type="entry name" value="Ribosom_S12_S23"/>
    <property type="match status" value="1"/>
</dbReference>
<dbReference type="PIRSF" id="PIRSF002133">
    <property type="entry name" value="Ribosomal_S12/S23"/>
    <property type="match status" value="1"/>
</dbReference>
<dbReference type="PRINTS" id="PR01034">
    <property type="entry name" value="RIBOSOMALS12"/>
</dbReference>
<dbReference type="SUPFAM" id="SSF50249">
    <property type="entry name" value="Nucleic acid-binding proteins"/>
    <property type="match status" value="1"/>
</dbReference>
<dbReference type="PROSITE" id="PS00055">
    <property type="entry name" value="RIBOSOMAL_S12"/>
    <property type="match status" value="1"/>
</dbReference>
<evidence type="ECO:0000250" key="1"/>
<evidence type="ECO:0000255" key="2">
    <source>
        <dbReference type="HAMAP-Rule" id="MF_00403"/>
    </source>
</evidence>
<evidence type="ECO:0000256" key="3">
    <source>
        <dbReference type="SAM" id="MobiDB-lite"/>
    </source>
</evidence>
<evidence type="ECO:0000305" key="4"/>
<organism>
    <name type="scientific">Bradyrhizobium sp. (strain ORS 278)</name>
    <dbReference type="NCBI Taxonomy" id="114615"/>
    <lineage>
        <taxon>Bacteria</taxon>
        <taxon>Pseudomonadati</taxon>
        <taxon>Pseudomonadota</taxon>
        <taxon>Alphaproteobacteria</taxon>
        <taxon>Hyphomicrobiales</taxon>
        <taxon>Nitrobacteraceae</taxon>
        <taxon>Bradyrhizobium</taxon>
    </lineage>
</organism>
<proteinExistence type="inferred from homology"/>
<name>RS12_BRASO</name>
<sequence>MPTINQLIANPREVQKSRKKVPALQQSPQKRGVCTRVYTTTPKKPNSALRKVAKVRLTNGFEVIGYIPGEGHNLQEHSVVMIRGGRVKDLPGVRYHILRGVLDTQGVKNRKQRRSKYGAKRPK</sequence>
<accession>A4YSI7</accession>
<comment type="function">
    <text evidence="2">With S4 and S5 plays an important role in translational accuracy.</text>
</comment>
<comment type="function">
    <text evidence="2">Interacts with and stabilizes bases of the 16S rRNA that are involved in tRNA selection in the A site and with the mRNA backbone. Located at the interface of the 30S and 50S subunits, it traverses the body of the 30S subunit contacting proteins on the other side and probably holding the rRNA structure together. The combined cluster of proteins S8, S12 and S17 appears to hold together the shoulder and platform of the 30S subunit.</text>
</comment>
<comment type="subunit">
    <text evidence="2">Part of the 30S ribosomal subunit. Contacts proteins S8 and S17. May interact with IF1 in the 30S initiation complex.</text>
</comment>
<comment type="similarity">
    <text evidence="2">Belongs to the universal ribosomal protein uS12 family.</text>
</comment>
<comment type="sequence caution" evidence="4">
    <conflict type="erroneous initiation">
        <sequence resource="EMBL-CDS" id="CAL76863"/>
    </conflict>
</comment>
<feature type="chain" id="PRO_0000295958" description="Small ribosomal subunit protein uS12">
    <location>
        <begin position="1"/>
        <end position="123"/>
    </location>
</feature>
<feature type="region of interest" description="Disordered" evidence="3">
    <location>
        <begin position="9"/>
        <end position="32"/>
    </location>
</feature>
<feature type="modified residue" description="3-methylthioaspartic acid" evidence="1">
    <location>
        <position position="89"/>
    </location>
</feature>
<keyword id="KW-0488">Methylation</keyword>
<keyword id="KW-1185">Reference proteome</keyword>
<keyword id="KW-0687">Ribonucleoprotein</keyword>
<keyword id="KW-0689">Ribosomal protein</keyword>
<keyword id="KW-0694">RNA-binding</keyword>
<keyword id="KW-0699">rRNA-binding</keyword>
<keyword id="KW-0820">tRNA-binding</keyword>
<gene>
    <name evidence="2" type="primary">rpsL</name>
    <name type="ordered locus">BRADO3061</name>
</gene>